<accession>B8CNE6</accession>
<comment type="function">
    <text evidence="1">Binds 16S rRNA, required for the assembly of 30S particles and may also be responsible for determining the conformation of the 16S rRNA at the A site.</text>
</comment>
<comment type="subunit">
    <text evidence="1">Part of the 30S ribosomal subunit. Contacts proteins S3 and S10.</text>
</comment>
<comment type="similarity">
    <text evidence="1">Belongs to the universal ribosomal protein uS14 family.</text>
</comment>
<name>RS14_SHEPW</name>
<evidence type="ECO:0000255" key="1">
    <source>
        <dbReference type="HAMAP-Rule" id="MF_00537"/>
    </source>
</evidence>
<evidence type="ECO:0000305" key="2"/>
<keyword id="KW-0687">Ribonucleoprotein</keyword>
<keyword id="KW-0689">Ribosomal protein</keyword>
<keyword id="KW-0694">RNA-binding</keyword>
<keyword id="KW-0699">rRNA-binding</keyword>
<dbReference type="EMBL" id="CP000472">
    <property type="protein sequence ID" value="ACJ28780.1"/>
    <property type="molecule type" value="Genomic_DNA"/>
</dbReference>
<dbReference type="RefSeq" id="WP_020912148.1">
    <property type="nucleotide sequence ID" value="NC_011566.1"/>
</dbReference>
<dbReference type="SMR" id="B8CNE6"/>
<dbReference type="STRING" id="225849.swp_2024"/>
<dbReference type="KEGG" id="swp:swp_2024"/>
<dbReference type="eggNOG" id="COG0199">
    <property type="taxonomic scope" value="Bacteria"/>
</dbReference>
<dbReference type="HOGENOM" id="CLU_139869_0_1_6"/>
<dbReference type="OrthoDB" id="9810484at2"/>
<dbReference type="Proteomes" id="UP000000753">
    <property type="component" value="Chromosome"/>
</dbReference>
<dbReference type="GO" id="GO:0005737">
    <property type="term" value="C:cytoplasm"/>
    <property type="evidence" value="ECO:0007669"/>
    <property type="project" value="UniProtKB-ARBA"/>
</dbReference>
<dbReference type="GO" id="GO:0015935">
    <property type="term" value="C:small ribosomal subunit"/>
    <property type="evidence" value="ECO:0007669"/>
    <property type="project" value="TreeGrafter"/>
</dbReference>
<dbReference type="GO" id="GO:0019843">
    <property type="term" value="F:rRNA binding"/>
    <property type="evidence" value="ECO:0007669"/>
    <property type="project" value="UniProtKB-UniRule"/>
</dbReference>
<dbReference type="GO" id="GO:0003735">
    <property type="term" value="F:structural constituent of ribosome"/>
    <property type="evidence" value="ECO:0007669"/>
    <property type="project" value="InterPro"/>
</dbReference>
<dbReference type="GO" id="GO:0006412">
    <property type="term" value="P:translation"/>
    <property type="evidence" value="ECO:0007669"/>
    <property type="project" value="UniProtKB-UniRule"/>
</dbReference>
<dbReference type="FunFam" id="1.10.287.1480:FF:000001">
    <property type="entry name" value="30S ribosomal protein S14"/>
    <property type="match status" value="1"/>
</dbReference>
<dbReference type="Gene3D" id="1.10.287.1480">
    <property type="match status" value="1"/>
</dbReference>
<dbReference type="HAMAP" id="MF_00537">
    <property type="entry name" value="Ribosomal_uS14_1"/>
    <property type="match status" value="1"/>
</dbReference>
<dbReference type="InterPro" id="IPR001209">
    <property type="entry name" value="Ribosomal_uS14"/>
</dbReference>
<dbReference type="InterPro" id="IPR023036">
    <property type="entry name" value="Ribosomal_uS14_bac/plastid"/>
</dbReference>
<dbReference type="InterPro" id="IPR018271">
    <property type="entry name" value="Ribosomal_uS14_CS"/>
</dbReference>
<dbReference type="NCBIfam" id="NF006477">
    <property type="entry name" value="PRK08881.1"/>
    <property type="match status" value="1"/>
</dbReference>
<dbReference type="PANTHER" id="PTHR19836">
    <property type="entry name" value="30S RIBOSOMAL PROTEIN S14"/>
    <property type="match status" value="1"/>
</dbReference>
<dbReference type="PANTHER" id="PTHR19836:SF19">
    <property type="entry name" value="SMALL RIBOSOMAL SUBUNIT PROTEIN US14M"/>
    <property type="match status" value="1"/>
</dbReference>
<dbReference type="Pfam" id="PF00253">
    <property type="entry name" value="Ribosomal_S14"/>
    <property type="match status" value="1"/>
</dbReference>
<dbReference type="SUPFAM" id="SSF57716">
    <property type="entry name" value="Glucocorticoid receptor-like (DNA-binding domain)"/>
    <property type="match status" value="1"/>
</dbReference>
<dbReference type="PROSITE" id="PS00527">
    <property type="entry name" value="RIBOSOMAL_S14"/>
    <property type="match status" value="1"/>
</dbReference>
<proteinExistence type="inferred from homology"/>
<reference key="1">
    <citation type="journal article" date="2008" name="PLoS ONE">
        <title>Environmental adaptation: genomic analysis of the piezotolerant and psychrotolerant deep-sea iron reducing bacterium Shewanella piezotolerans WP3.</title>
        <authorList>
            <person name="Wang F."/>
            <person name="Wang J."/>
            <person name="Jian H."/>
            <person name="Zhang B."/>
            <person name="Li S."/>
            <person name="Wang F."/>
            <person name="Zeng X."/>
            <person name="Gao L."/>
            <person name="Bartlett D.H."/>
            <person name="Yu J."/>
            <person name="Hu S."/>
            <person name="Xiao X."/>
        </authorList>
    </citation>
    <scope>NUCLEOTIDE SEQUENCE [LARGE SCALE GENOMIC DNA]</scope>
    <source>
        <strain>WP3 / JCM 13877</strain>
    </source>
</reference>
<gene>
    <name evidence="1" type="primary">rpsN</name>
    <name type="ordered locus">swp_2024</name>
</gene>
<organism>
    <name type="scientific">Shewanella piezotolerans (strain WP3 / JCM 13877)</name>
    <dbReference type="NCBI Taxonomy" id="225849"/>
    <lineage>
        <taxon>Bacteria</taxon>
        <taxon>Pseudomonadati</taxon>
        <taxon>Pseudomonadota</taxon>
        <taxon>Gammaproteobacteria</taxon>
        <taxon>Alteromonadales</taxon>
        <taxon>Shewanellaceae</taxon>
        <taxon>Shewanella</taxon>
    </lineage>
</organism>
<feature type="chain" id="PRO_1000128580" description="Small ribosomal subunit protein uS14">
    <location>
        <begin position="1"/>
        <end position="101"/>
    </location>
</feature>
<protein>
    <recommendedName>
        <fullName evidence="1">Small ribosomal subunit protein uS14</fullName>
    </recommendedName>
    <alternativeName>
        <fullName evidence="2">30S ribosomal protein S14</fullName>
    </alternativeName>
</protein>
<sequence length="101" mass="11395">MAKSSMKAREAKRAKLVAKFAEKRLALKAIISSPTTSDEDRWDAVLKLQALPRDSSSARQRNRCSQTGRPHGFLRKFGLSRIKLREATMRGEVPGLRKASW</sequence>